<evidence type="ECO:0000255" key="1">
    <source>
        <dbReference type="HAMAP-Rule" id="MF_00252"/>
    </source>
</evidence>
<organism>
    <name type="scientific">Staphylococcus aureus (strain N315)</name>
    <dbReference type="NCBI Taxonomy" id="158879"/>
    <lineage>
        <taxon>Bacteria</taxon>
        <taxon>Bacillati</taxon>
        <taxon>Bacillota</taxon>
        <taxon>Bacilli</taxon>
        <taxon>Bacillales</taxon>
        <taxon>Staphylococcaceae</taxon>
        <taxon>Staphylococcus</taxon>
    </lineage>
</organism>
<sequence>MSEEMNDQMLVRRQKLQELYDLGIDPFGSKFDRSGLSSDLKEEWDQYSKEELVEKEADSHVAIAGRLMTKRGKGKAGFAHVQDLAGQIQIYVRKDQVGDDEFDLWKNADLGDIVGVEGVMFKTNTGELSVKAKKFTLLTKSLRPLPDKFHGLQDIEQRYRQRYLDLITNEDSTRTFINRSKIIQEMRNYLNNKGFLEVETPMMHQIAGGAAARPFVTHHNALDATLYMRIAIELHLKRLIVGGLEKVYEIGRVFRNEGVSTRHNPEFTMIELYEAYADYHDIMDLTESMVRHIANEVLGSAKVQYNGETIDLESAWTRLHIVDAVKEATGVDFYEVKSDEEAKALAKEHGIEIKDTMKYGHILNEFFEQKVEETLIQPTFIYGHPTEISPLAKKNPEDPRFTDRFELFIVGREHANAFTELNDPIDQKGRFEAQLVEKAQGNDEAHEMDEDYIEALEYGMPPTGGLGIGIDRLVMLLTDSPSIRDVLLFPYMRQK</sequence>
<protein>
    <recommendedName>
        <fullName evidence="1">Lysine--tRNA ligase</fullName>
        <ecNumber evidence="1">6.1.1.6</ecNumber>
    </recommendedName>
    <alternativeName>
        <fullName evidence="1">Lysyl-tRNA synthetase</fullName>
        <shortName evidence="1">LysRS</shortName>
    </alternativeName>
</protein>
<proteinExistence type="evidence at protein level"/>
<name>SYK_STAAN</name>
<keyword id="KW-0030">Aminoacyl-tRNA synthetase</keyword>
<keyword id="KW-0067">ATP-binding</keyword>
<keyword id="KW-0963">Cytoplasm</keyword>
<keyword id="KW-0436">Ligase</keyword>
<keyword id="KW-0460">Magnesium</keyword>
<keyword id="KW-0479">Metal-binding</keyword>
<keyword id="KW-0547">Nucleotide-binding</keyword>
<keyword id="KW-0648">Protein biosynthesis</keyword>
<comment type="catalytic activity">
    <reaction evidence="1">
        <text>tRNA(Lys) + L-lysine + ATP = L-lysyl-tRNA(Lys) + AMP + diphosphate</text>
        <dbReference type="Rhea" id="RHEA:20792"/>
        <dbReference type="Rhea" id="RHEA-COMP:9696"/>
        <dbReference type="Rhea" id="RHEA-COMP:9697"/>
        <dbReference type="ChEBI" id="CHEBI:30616"/>
        <dbReference type="ChEBI" id="CHEBI:32551"/>
        <dbReference type="ChEBI" id="CHEBI:33019"/>
        <dbReference type="ChEBI" id="CHEBI:78442"/>
        <dbReference type="ChEBI" id="CHEBI:78529"/>
        <dbReference type="ChEBI" id="CHEBI:456215"/>
        <dbReference type="EC" id="6.1.1.6"/>
    </reaction>
</comment>
<comment type="cofactor">
    <cofactor evidence="1">
        <name>Mg(2+)</name>
        <dbReference type="ChEBI" id="CHEBI:18420"/>
    </cofactor>
    <text evidence="1">Binds 3 Mg(2+) ions per subunit.</text>
</comment>
<comment type="subunit">
    <text evidence="1">Homodimer.</text>
</comment>
<comment type="subcellular location">
    <subcellularLocation>
        <location evidence="1">Cytoplasm</location>
    </subcellularLocation>
</comment>
<comment type="similarity">
    <text evidence="1">Belongs to the class-II aminoacyl-tRNA synthetase family.</text>
</comment>
<dbReference type="EC" id="6.1.1.6" evidence="1"/>
<dbReference type="EMBL" id="BA000018">
    <property type="protein sequence ID" value="BAB41705.1"/>
    <property type="molecule type" value="Genomic_DNA"/>
</dbReference>
<dbReference type="PIR" id="F89818">
    <property type="entry name" value="F89818"/>
</dbReference>
<dbReference type="RefSeq" id="WP_001288202.1">
    <property type="nucleotide sequence ID" value="NC_002745.2"/>
</dbReference>
<dbReference type="SMR" id="P67610"/>
<dbReference type="EnsemblBacteria" id="BAB41705">
    <property type="protein sequence ID" value="BAB41705"/>
    <property type="gene ID" value="BAB41705"/>
</dbReference>
<dbReference type="GeneID" id="98344832"/>
<dbReference type="KEGG" id="sau:SA0475"/>
<dbReference type="HOGENOM" id="CLU_008255_6_0_9"/>
<dbReference type="GO" id="GO:0005829">
    <property type="term" value="C:cytosol"/>
    <property type="evidence" value="ECO:0007669"/>
    <property type="project" value="TreeGrafter"/>
</dbReference>
<dbReference type="GO" id="GO:0005524">
    <property type="term" value="F:ATP binding"/>
    <property type="evidence" value="ECO:0007669"/>
    <property type="project" value="UniProtKB-UniRule"/>
</dbReference>
<dbReference type="GO" id="GO:0140096">
    <property type="term" value="F:catalytic activity, acting on a protein"/>
    <property type="evidence" value="ECO:0007669"/>
    <property type="project" value="UniProtKB-ARBA"/>
</dbReference>
<dbReference type="GO" id="GO:0004824">
    <property type="term" value="F:lysine-tRNA ligase activity"/>
    <property type="evidence" value="ECO:0007669"/>
    <property type="project" value="UniProtKB-UniRule"/>
</dbReference>
<dbReference type="GO" id="GO:0000287">
    <property type="term" value="F:magnesium ion binding"/>
    <property type="evidence" value="ECO:0007669"/>
    <property type="project" value="UniProtKB-UniRule"/>
</dbReference>
<dbReference type="GO" id="GO:0016740">
    <property type="term" value="F:transferase activity"/>
    <property type="evidence" value="ECO:0007669"/>
    <property type="project" value="UniProtKB-ARBA"/>
</dbReference>
<dbReference type="GO" id="GO:0000049">
    <property type="term" value="F:tRNA binding"/>
    <property type="evidence" value="ECO:0007669"/>
    <property type="project" value="TreeGrafter"/>
</dbReference>
<dbReference type="GO" id="GO:0006430">
    <property type="term" value="P:lysyl-tRNA aminoacylation"/>
    <property type="evidence" value="ECO:0007669"/>
    <property type="project" value="UniProtKB-UniRule"/>
</dbReference>
<dbReference type="CDD" id="cd00775">
    <property type="entry name" value="LysRS_core"/>
    <property type="match status" value="1"/>
</dbReference>
<dbReference type="CDD" id="cd04322">
    <property type="entry name" value="LysRS_N"/>
    <property type="match status" value="1"/>
</dbReference>
<dbReference type="FunFam" id="2.40.50.140:FF:000024">
    <property type="entry name" value="Lysine--tRNA ligase"/>
    <property type="match status" value="1"/>
</dbReference>
<dbReference type="FunFam" id="3.30.930.10:FF:000001">
    <property type="entry name" value="Lysine--tRNA ligase"/>
    <property type="match status" value="1"/>
</dbReference>
<dbReference type="Gene3D" id="3.30.930.10">
    <property type="entry name" value="Bira Bifunctional Protein, Domain 2"/>
    <property type="match status" value="1"/>
</dbReference>
<dbReference type="Gene3D" id="2.40.50.140">
    <property type="entry name" value="Nucleic acid-binding proteins"/>
    <property type="match status" value="1"/>
</dbReference>
<dbReference type="HAMAP" id="MF_00252">
    <property type="entry name" value="Lys_tRNA_synth_class2"/>
    <property type="match status" value="1"/>
</dbReference>
<dbReference type="InterPro" id="IPR004364">
    <property type="entry name" value="Aa-tRNA-synt_II"/>
</dbReference>
<dbReference type="InterPro" id="IPR006195">
    <property type="entry name" value="aa-tRNA-synth_II"/>
</dbReference>
<dbReference type="InterPro" id="IPR045864">
    <property type="entry name" value="aa-tRNA-synth_II/BPL/LPL"/>
</dbReference>
<dbReference type="InterPro" id="IPR002313">
    <property type="entry name" value="Lys-tRNA-ligase_II"/>
</dbReference>
<dbReference type="InterPro" id="IPR034762">
    <property type="entry name" value="Lys-tRNA-ligase_II_bac/euk"/>
</dbReference>
<dbReference type="InterPro" id="IPR044136">
    <property type="entry name" value="Lys-tRNA-ligase_II_N"/>
</dbReference>
<dbReference type="InterPro" id="IPR018149">
    <property type="entry name" value="Lys-tRNA-synth_II_C"/>
</dbReference>
<dbReference type="InterPro" id="IPR012340">
    <property type="entry name" value="NA-bd_OB-fold"/>
</dbReference>
<dbReference type="InterPro" id="IPR004365">
    <property type="entry name" value="NA-bd_OB_tRNA"/>
</dbReference>
<dbReference type="NCBIfam" id="TIGR00499">
    <property type="entry name" value="lysS_bact"/>
    <property type="match status" value="1"/>
</dbReference>
<dbReference type="NCBIfam" id="NF001756">
    <property type="entry name" value="PRK00484.1"/>
    <property type="match status" value="1"/>
</dbReference>
<dbReference type="PANTHER" id="PTHR42918:SF15">
    <property type="entry name" value="LYSINE--TRNA LIGASE, CHLOROPLASTIC_MITOCHONDRIAL"/>
    <property type="match status" value="1"/>
</dbReference>
<dbReference type="PANTHER" id="PTHR42918">
    <property type="entry name" value="LYSYL-TRNA SYNTHETASE"/>
    <property type="match status" value="1"/>
</dbReference>
<dbReference type="Pfam" id="PF00152">
    <property type="entry name" value="tRNA-synt_2"/>
    <property type="match status" value="1"/>
</dbReference>
<dbReference type="Pfam" id="PF01336">
    <property type="entry name" value="tRNA_anti-codon"/>
    <property type="match status" value="1"/>
</dbReference>
<dbReference type="PIRSF" id="PIRSF039101">
    <property type="entry name" value="LysRS2"/>
    <property type="match status" value="1"/>
</dbReference>
<dbReference type="PRINTS" id="PR00982">
    <property type="entry name" value="TRNASYNTHLYS"/>
</dbReference>
<dbReference type="SUPFAM" id="SSF55681">
    <property type="entry name" value="Class II aaRS and biotin synthetases"/>
    <property type="match status" value="1"/>
</dbReference>
<dbReference type="SUPFAM" id="SSF50249">
    <property type="entry name" value="Nucleic acid-binding proteins"/>
    <property type="match status" value="1"/>
</dbReference>
<dbReference type="PROSITE" id="PS50862">
    <property type="entry name" value="AA_TRNA_LIGASE_II"/>
    <property type="match status" value="1"/>
</dbReference>
<feature type="chain" id="PRO_0000152677" description="Lysine--tRNA ligase">
    <location>
        <begin position="1"/>
        <end position="495"/>
    </location>
</feature>
<feature type="binding site" evidence="1">
    <location>
        <position position="406"/>
    </location>
    <ligand>
        <name>Mg(2+)</name>
        <dbReference type="ChEBI" id="CHEBI:18420"/>
        <label>1</label>
    </ligand>
</feature>
<feature type="binding site" evidence="1">
    <location>
        <position position="413"/>
    </location>
    <ligand>
        <name>Mg(2+)</name>
        <dbReference type="ChEBI" id="CHEBI:18420"/>
        <label>1</label>
    </ligand>
</feature>
<feature type="binding site" evidence="1">
    <location>
        <position position="413"/>
    </location>
    <ligand>
        <name>Mg(2+)</name>
        <dbReference type="ChEBI" id="CHEBI:18420"/>
        <label>2</label>
    </ligand>
</feature>
<gene>
    <name evidence="1" type="primary">lysS</name>
    <name type="ordered locus">SA0475</name>
</gene>
<accession>P67610</accession>
<accession>Q99W86</accession>
<reference key="1">
    <citation type="journal article" date="2001" name="Lancet">
        <title>Whole genome sequencing of meticillin-resistant Staphylococcus aureus.</title>
        <authorList>
            <person name="Kuroda M."/>
            <person name="Ohta T."/>
            <person name="Uchiyama I."/>
            <person name="Baba T."/>
            <person name="Yuzawa H."/>
            <person name="Kobayashi I."/>
            <person name="Cui L."/>
            <person name="Oguchi A."/>
            <person name="Aoki K."/>
            <person name="Nagai Y."/>
            <person name="Lian J.-Q."/>
            <person name="Ito T."/>
            <person name="Kanamori M."/>
            <person name="Matsumaru H."/>
            <person name="Maruyama A."/>
            <person name="Murakami H."/>
            <person name="Hosoyama A."/>
            <person name="Mizutani-Ui Y."/>
            <person name="Takahashi N.K."/>
            <person name="Sawano T."/>
            <person name="Inoue R."/>
            <person name="Kaito C."/>
            <person name="Sekimizu K."/>
            <person name="Hirakawa H."/>
            <person name="Kuhara S."/>
            <person name="Goto S."/>
            <person name="Yabuzaki J."/>
            <person name="Kanehisa M."/>
            <person name="Yamashita A."/>
            <person name="Oshima K."/>
            <person name="Furuya K."/>
            <person name="Yoshino C."/>
            <person name="Shiba T."/>
            <person name="Hattori M."/>
            <person name="Ogasawara N."/>
            <person name="Hayashi H."/>
            <person name="Hiramatsu K."/>
        </authorList>
    </citation>
    <scope>NUCLEOTIDE SEQUENCE [LARGE SCALE GENOMIC DNA]</scope>
    <source>
        <strain>N315</strain>
    </source>
</reference>
<reference key="2">
    <citation type="submission" date="2005-11" db="UniProtKB">
        <title>Shotgun proteomic analysis of total protein extract of S. aureus S30 versus N315.</title>
        <authorList>
            <person name="Stenz L."/>
        </authorList>
    </citation>
    <scope>IDENTIFICATION BY MASS SPECTROMETRY</scope>
</reference>
<reference key="3">
    <citation type="submission" date="2007-10" db="UniProtKB">
        <title>Shotgun proteomic analysis of total and membrane protein extracts of S. aureus strain N315.</title>
        <authorList>
            <person name="Vaezzadeh A.R."/>
            <person name="Deshusses J."/>
            <person name="Lescuyer P."/>
            <person name="Hochstrasser D.F."/>
        </authorList>
    </citation>
    <scope>IDENTIFICATION BY MASS SPECTROMETRY [LARGE SCALE ANALYSIS]</scope>
    <source>
        <strain>N315</strain>
    </source>
</reference>